<reference key="1">
    <citation type="journal article" date="2003" name="Proc. Natl. Acad. Sci. U.S.A.">
        <title>The genome of Nanoarchaeum equitans: insights into early archaeal evolution and derived parasitism.</title>
        <authorList>
            <person name="Waters E."/>
            <person name="Hohn M.J."/>
            <person name="Ahel I."/>
            <person name="Graham D.E."/>
            <person name="Adams M.D."/>
            <person name="Barnstead M."/>
            <person name="Beeson K.Y."/>
            <person name="Bibbs L."/>
            <person name="Bolanos R."/>
            <person name="Keller M."/>
            <person name="Kretz K."/>
            <person name="Lin X."/>
            <person name="Mathur E."/>
            <person name="Ni J."/>
            <person name="Podar M."/>
            <person name="Richardson T."/>
            <person name="Sutton G.G."/>
            <person name="Simon M."/>
            <person name="Soell D."/>
            <person name="Stetter K.O."/>
            <person name="Short J.M."/>
            <person name="Noorderwier M."/>
        </authorList>
    </citation>
    <scope>NUCLEOTIDE SEQUENCE [LARGE SCALE GENOMIC DNA]</scope>
    <source>
        <strain>Kin4-M</strain>
    </source>
</reference>
<feature type="chain" id="PRO_0000159697" description="Bifunctional methyltransferase-like/endonuclease">
    <location>
        <begin position="1"/>
        <end position="299"/>
    </location>
</feature>
<feature type="region of interest" description="Probable methylated-DNA--protein-cysteine methyltransferase-like">
    <location>
        <begin position="1"/>
        <end position="80"/>
    </location>
</feature>
<feature type="region of interest" description="Endonuclease V">
    <location>
        <begin position="81"/>
        <end position="299"/>
    </location>
</feature>
<feature type="binding site" evidence="1">
    <location>
        <position position="135"/>
    </location>
    <ligand>
        <name>Mg(2+)</name>
        <dbReference type="ChEBI" id="CHEBI:18420"/>
    </ligand>
</feature>
<feature type="binding site" evidence="2">
    <location>
        <position position="197"/>
    </location>
    <ligand>
        <name>Mg(2+)</name>
        <dbReference type="ChEBI" id="CHEBI:18420"/>
    </ligand>
</feature>
<feature type="site" description="Interaction with target DNA" evidence="1">
    <location>
        <position position="168"/>
    </location>
</feature>
<accession>Q74NK2</accession>
<comment type="function">
    <text evidence="1">DNA repair enzyme involved in the repair of deaminated bases. Selectively cleaves double-stranded DNA at the second phosphodiester bond 3' to a deoxyinosine leaving behind the intact lesion on the nicked DNA (By similarity).</text>
</comment>
<comment type="catalytic activity">
    <reaction>
        <text>Endonucleolytic cleavage at apurinic or apyrimidinic sites to products with a 5'-phosphate.</text>
        <dbReference type="EC" id="3.1.21.7"/>
    </reaction>
</comment>
<comment type="cofactor">
    <cofactor evidence="1">
        <name>Mg(2+)</name>
        <dbReference type="ChEBI" id="CHEBI:18420"/>
    </cofactor>
</comment>
<comment type="subcellular location">
    <subcellularLocation>
        <location evidence="1">Cytoplasm</location>
    </subcellularLocation>
</comment>
<comment type="similarity">
    <text evidence="3">In the N-terminal section; belongs to the MGMT family.</text>
</comment>
<comment type="similarity">
    <text evidence="3">In the C-terminal section; belongs to the endonuclease V family.</text>
</comment>
<comment type="caution">
    <text evidence="3">Lacks the potential active site region of the MGMT family and therefore has probably lost the methyltransferase activity.</text>
</comment>
<evidence type="ECO:0000250" key="1"/>
<evidence type="ECO:0000255" key="2"/>
<evidence type="ECO:0000305" key="3"/>
<name>NFI_NANEQ</name>
<organism>
    <name type="scientific">Nanoarchaeum equitans (strain Kin4-M)</name>
    <dbReference type="NCBI Taxonomy" id="228908"/>
    <lineage>
        <taxon>Archaea</taxon>
        <taxon>Nanobdellota</taxon>
        <taxon>Candidatus Nanoarchaeia</taxon>
        <taxon>Nanoarchaeales</taxon>
        <taxon>Nanoarchaeaceae</taxon>
        <taxon>Nanoarchaeum</taxon>
    </lineage>
</organism>
<sequence>MLSSKLLDINYWNKFGKRLINELINLIEQIPKGYVTTFKELAKALGDPIATKFVAMYYKKAPHWYRVVSSNLIVSPMQKALLEKEVKIIGNKVYAPIFKDFKSSKPLLELQKIQEYLVNKIKFDYPEYDYVIGIDIGYKNNIIALAIFDKNKKLIETKTCKHNIEFPYIPTYLSFREGIPIVNILKDLDYTALYIINGHGLSHPRKMGLATFVGTVLDLPTIGDAKKLLYGKIKNNIIYAHNMPVGYFVGHYVTIGNRTNLEFLKEFIKEWNSKKYLLPIEVADKITKCGRGDSNPGRD</sequence>
<keyword id="KW-0963">Cytoplasm</keyword>
<keyword id="KW-0227">DNA damage</keyword>
<keyword id="KW-0234">DNA repair</keyword>
<keyword id="KW-0255">Endonuclease</keyword>
<keyword id="KW-0378">Hydrolase</keyword>
<keyword id="KW-0460">Magnesium</keyword>
<keyword id="KW-0479">Metal-binding</keyword>
<keyword id="KW-0540">Nuclease</keyword>
<keyword id="KW-1185">Reference proteome</keyword>
<dbReference type="EC" id="3.1.21.7"/>
<dbReference type="EMBL" id="AE017199">
    <property type="protein sequence ID" value="AAR39194.1"/>
    <property type="molecule type" value="Genomic_DNA"/>
</dbReference>
<dbReference type="SMR" id="Q74NK2"/>
<dbReference type="STRING" id="228908.NEQ345a"/>
<dbReference type="EnsemblBacteria" id="AAR39194">
    <property type="protein sequence ID" value="AAR39194"/>
    <property type="gene ID" value="NEQ345a"/>
</dbReference>
<dbReference type="KEGG" id="neq:NEQ345a"/>
<dbReference type="HOGENOM" id="CLU_047631_1_1_2"/>
<dbReference type="Proteomes" id="UP000000578">
    <property type="component" value="Chromosome"/>
</dbReference>
<dbReference type="GO" id="GO:0005737">
    <property type="term" value="C:cytoplasm"/>
    <property type="evidence" value="ECO:0007669"/>
    <property type="project" value="UniProtKB-SubCell"/>
</dbReference>
<dbReference type="GO" id="GO:0043737">
    <property type="term" value="F:deoxyribonuclease V activity"/>
    <property type="evidence" value="ECO:0007669"/>
    <property type="project" value="UniProtKB-EC"/>
</dbReference>
<dbReference type="GO" id="GO:0046872">
    <property type="term" value="F:metal ion binding"/>
    <property type="evidence" value="ECO:0007669"/>
    <property type="project" value="UniProtKB-KW"/>
</dbReference>
<dbReference type="GO" id="GO:0016891">
    <property type="term" value="F:RNA endonuclease activity, producing 5'-phosphomonoesters"/>
    <property type="evidence" value="ECO:0007669"/>
    <property type="project" value="TreeGrafter"/>
</dbReference>
<dbReference type="GO" id="GO:0003727">
    <property type="term" value="F:single-stranded RNA binding"/>
    <property type="evidence" value="ECO:0007669"/>
    <property type="project" value="TreeGrafter"/>
</dbReference>
<dbReference type="GO" id="GO:0006281">
    <property type="term" value="P:DNA repair"/>
    <property type="evidence" value="ECO:0007669"/>
    <property type="project" value="UniProtKB-KW"/>
</dbReference>
<dbReference type="CDD" id="cd06559">
    <property type="entry name" value="Endonuclease_V"/>
    <property type="match status" value="1"/>
</dbReference>
<dbReference type="Gene3D" id="3.30.2170.10">
    <property type="entry name" value="archaeoglobus fulgidus dsm 4304 superfamily"/>
    <property type="match status" value="1"/>
</dbReference>
<dbReference type="Gene3D" id="1.10.10.10">
    <property type="entry name" value="Winged helix-like DNA-binding domain superfamily/Winged helix DNA-binding domain"/>
    <property type="match status" value="1"/>
</dbReference>
<dbReference type="InterPro" id="IPR007581">
    <property type="entry name" value="Endonuclease-V"/>
</dbReference>
<dbReference type="InterPro" id="IPR014048">
    <property type="entry name" value="MethylDNA_cys_MeTrfase_DNA-bd"/>
</dbReference>
<dbReference type="InterPro" id="IPR036217">
    <property type="entry name" value="MethylDNA_cys_MeTrfase_DNAb"/>
</dbReference>
<dbReference type="InterPro" id="IPR036388">
    <property type="entry name" value="WH-like_DNA-bd_sf"/>
</dbReference>
<dbReference type="PANTHER" id="PTHR28511">
    <property type="entry name" value="ENDONUCLEASE V"/>
    <property type="match status" value="1"/>
</dbReference>
<dbReference type="PANTHER" id="PTHR28511:SF1">
    <property type="entry name" value="ENDONUCLEASE V"/>
    <property type="match status" value="1"/>
</dbReference>
<dbReference type="Pfam" id="PF01035">
    <property type="entry name" value="DNA_binding_1"/>
    <property type="match status" value="1"/>
</dbReference>
<dbReference type="Pfam" id="PF04493">
    <property type="entry name" value="Endonuclease_5"/>
    <property type="match status" value="1"/>
</dbReference>
<dbReference type="SUPFAM" id="SSF46767">
    <property type="entry name" value="Methylated DNA-protein cysteine methyltransferase, C-terminal domain"/>
    <property type="match status" value="1"/>
</dbReference>
<protein>
    <recommendedName>
        <fullName>Bifunctional methyltransferase-like/endonuclease</fullName>
    </recommendedName>
    <domain>
        <recommendedName>
            <fullName>Probable methylated-DNA--protein-cysteine methyltransferase-like</fullName>
        </recommendedName>
    </domain>
    <domain>
        <recommendedName>
            <fullName>Endonuclease V</fullName>
            <ecNumber>3.1.21.7</ecNumber>
        </recommendedName>
        <alternativeName>
            <fullName>Deoxyinosine 3'endonuclease</fullName>
        </alternativeName>
        <alternativeName>
            <fullName>Deoxyribonuclease V</fullName>
            <shortName>DNase V</shortName>
        </alternativeName>
    </domain>
</protein>
<proteinExistence type="inferred from homology"/>
<gene>
    <name type="ordered locus">NEQ345.1</name>
    <name type="ORF">NEQ345a</name>
</gene>